<dbReference type="EMBL" id="X59991">
    <property type="protein sequence ID" value="CAA42608.1"/>
    <property type="molecule type" value="mRNA"/>
</dbReference>
<dbReference type="PIR" id="A61244">
    <property type="entry name" value="A61244"/>
</dbReference>
<dbReference type="GO" id="GO:0005576">
    <property type="term" value="C:extracellular region"/>
    <property type="evidence" value="ECO:0007669"/>
    <property type="project" value="UniProtKB-SubCell"/>
</dbReference>
<dbReference type="GO" id="GO:0005179">
    <property type="term" value="F:hormone activity"/>
    <property type="evidence" value="ECO:0007669"/>
    <property type="project" value="UniProtKB-KW"/>
</dbReference>
<dbReference type="GO" id="GO:0097746">
    <property type="term" value="P:blood vessel diameter maintenance"/>
    <property type="evidence" value="ECO:0007669"/>
    <property type="project" value="UniProtKB-KW"/>
</dbReference>
<dbReference type="GO" id="GO:0006182">
    <property type="term" value="P:cGMP biosynthetic process"/>
    <property type="evidence" value="ECO:0000250"/>
    <property type="project" value="UniProtKB"/>
</dbReference>
<dbReference type="GO" id="GO:0007168">
    <property type="term" value="P:receptor guanylyl cyclase signaling pathway"/>
    <property type="evidence" value="ECO:0000250"/>
    <property type="project" value="UniProtKB"/>
</dbReference>
<dbReference type="InterPro" id="IPR002406">
    <property type="entry name" value="C_natriurtcpep"/>
</dbReference>
<dbReference type="InterPro" id="IPR000663">
    <property type="entry name" value="Natr_peptide"/>
</dbReference>
<dbReference type="InterPro" id="IPR030480">
    <property type="entry name" value="Natr_peptide_CS"/>
</dbReference>
<dbReference type="PANTHER" id="PTHR12167">
    <property type="entry name" value="C-TYPE NATRIURETIC PEPTIDE"/>
    <property type="match status" value="1"/>
</dbReference>
<dbReference type="PANTHER" id="PTHR12167:SF5">
    <property type="entry name" value="C-TYPE NATRIURETIC PEPTIDE 3-LIKE PRECURSOR"/>
    <property type="match status" value="1"/>
</dbReference>
<dbReference type="Pfam" id="PF00212">
    <property type="entry name" value="ANP"/>
    <property type="match status" value="1"/>
</dbReference>
<dbReference type="PRINTS" id="PR00713">
    <property type="entry name" value="CNATPEPTIDE"/>
</dbReference>
<dbReference type="PRINTS" id="PR00710">
    <property type="entry name" value="NATPEPTIDES"/>
</dbReference>
<dbReference type="SMART" id="SM00183">
    <property type="entry name" value="NAT_PEP"/>
    <property type="match status" value="1"/>
</dbReference>
<dbReference type="PROSITE" id="PS00263">
    <property type="entry name" value="NATRIURETIC_PEPTIDE"/>
    <property type="match status" value="1"/>
</dbReference>
<comment type="function">
    <text evidence="1">Hormone which may be vasoactive and natriuretic. Has a cGMP-stimulating activity (By similarity).</text>
</comment>
<comment type="subcellular location">
    <subcellularLocation>
        <location>Secreted</location>
    </subcellularLocation>
</comment>
<comment type="similarity">
    <text evidence="4">Belongs to the natriuretic peptide family.</text>
</comment>
<feature type="signal peptide" evidence="2">
    <location>
        <begin position="1"/>
        <end position="25"/>
    </location>
</feature>
<feature type="propeptide" id="PRO_0000001601">
    <location>
        <begin position="26"/>
        <end position="113"/>
    </location>
</feature>
<feature type="peptide" id="PRO_0000001602" description="C-type natriuretic peptide">
    <location>
        <begin position="114"/>
        <end position="135"/>
    </location>
</feature>
<feature type="region of interest" description="Disordered" evidence="3">
    <location>
        <begin position="46"/>
        <end position="67"/>
    </location>
</feature>
<feature type="disulfide bond" evidence="1">
    <location>
        <begin position="119"/>
        <end position="135"/>
    </location>
</feature>
<reference key="1">
    <citation type="journal article" date="1991" name="Am. J. Physiol.">
        <title>Identification of C-type natriuretic peptide in heart of spiny dogfish shark (Squalus acanthias).</title>
        <authorList>
            <person name="Schofield J.P."/>
            <person name="Jones D.S.C."/>
            <person name="Forrest J.N. Jr."/>
        </authorList>
    </citation>
    <scope>NUCLEOTIDE SEQUENCE [MRNA]</scope>
    <source>
        <tissue>Heart</tissue>
    </source>
</reference>
<protein>
    <recommendedName>
        <fullName>C-type natriuretic peptide</fullName>
    </recommendedName>
</protein>
<evidence type="ECO:0000250" key="1"/>
<evidence type="ECO:0000255" key="2"/>
<evidence type="ECO:0000256" key="3">
    <source>
        <dbReference type="SAM" id="MobiDB-lite"/>
    </source>
</evidence>
<evidence type="ECO:0000305" key="4"/>
<accession>P41319</accession>
<organism>
    <name type="scientific">Squalus acanthias</name>
    <name type="common">Spiny dogfish</name>
    <dbReference type="NCBI Taxonomy" id="7797"/>
    <lineage>
        <taxon>Eukaryota</taxon>
        <taxon>Metazoa</taxon>
        <taxon>Chordata</taxon>
        <taxon>Craniata</taxon>
        <taxon>Vertebrata</taxon>
        <taxon>Chondrichthyes</taxon>
        <taxon>Elasmobranchii</taxon>
        <taxon>Squalomorphii</taxon>
        <taxon>Squaliformes</taxon>
        <taxon>Squalidae</taxon>
        <taxon>Squalus</taxon>
    </lineage>
</organism>
<name>ANFC_SQUAC</name>
<keyword id="KW-0165">Cleavage on pair of basic residues</keyword>
<keyword id="KW-1015">Disulfide bond</keyword>
<keyword id="KW-0372">Hormone</keyword>
<keyword id="KW-0964">Secreted</keyword>
<keyword id="KW-0732">Signal</keyword>
<keyword id="KW-0838">Vasoactive</keyword>
<proteinExistence type="evidence at transcript level"/>
<sequence length="135" mass="15062">MSGHTSFYCGLLLLLLIQVQARPRADDSLQVLSRLLEDEYGHFNSEELNNEAQEISPAASLPDLNTDQSDLELPWDRESREIGGRSFRQEALLARLLQDLSNNPLRFKGRSKKGPSRSCFGLKLDRIGAMSGLGC</sequence>